<keyword id="KW-0406">Ion transport</keyword>
<keyword id="KW-0408">Iron</keyword>
<keyword id="KW-0410">Iron transport</keyword>
<keyword id="KW-0574">Periplasm</keyword>
<keyword id="KW-1185">Reference proteome</keyword>
<keyword id="KW-0732">Signal</keyword>
<keyword id="KW-0813">Transport</keyword>
<protein>
    <recommendedName>
        <fullName evidence="9">Fe(3+) dicitrate-binding periplasmic protein FecB</fullName>
    </recommendedName>
    <alternativeName>
        <fullName>Iron(III) dicitrate-binding periplasmic protein</fullName>
    </alternativeName>
</protein>
<name>FECB_ECOLI</name>
<sequence length="300" mass="33146">MLAFIRFLFAGLLLVISHAFAATVQDEHGTFTLEKTPQRIVVLELSFADALAAVDVIPIGIADDNDAKRILPEVRAHLKPWQSVGTRAQPSLEAIAALKPDLIIADSSRHAGVYIALQQIAPVLLLKSRNETYAENLQSAAIIGEMVGKKREMQARLEQHKERMAQWASQLPKGTRVAFGTSREQQFNLHTQETWTGSVLASLGLNVPAAMAGASMPSIGLEQLLAVNPAWLLVAHYREESIVKRWQQDPLWQMLTAAQKQQVASVDSNTWARMRGIFAAERIAADTVKIFHHQPLTVVK</sequence>
<dbReference type="EMBL" id="M26397">
    <property type="protein sequence ID" value="AAA23762.1"/>
    <property type="molecule type" value="Genomic_DNA"/>
</dbReference>
<dbReference type="EMBL" id="U14003">
    <property type="protein sequence ID" value="AAA97186.1"/>
    <property type="status" value="ALT_INIT"/>
    <property type="molecule type" value="Genomic_DNA"/>
</dbReference>
<dbReference type="EMBL" id="U00096">
    <property type="protein sequence ID" value="AAC77246.2"/>
    <property type="molecule type" value="Genomic_DNA"/>
</dbReference>
<dbReference type="EMBL" id="AP009048">
    <property type="protein sequence ID" value="BAE78281.1"/>
    <property type="molecule type" value="Genomic_DNA"/>
</dbReference>
<dbReference type="PIR" id="S56515">
    <property type="entry name" value="QRECD3"/>
</dbReference>
<dbReference type="RefSeq" id="NP_418710.4">
    <property type="nucleotide sequence ID" value="NC_000913.3"/>
</dbReference>
<dbReference type="RefSeq" id="WP_000879155.1">
    <property type="nucleotide sequence ID" value="NZ_LN832404.1"/>
</dbReference>
<dbReference type="SMR" id="P15028"/>
<dbReference type="BioGRID" id="4261562">
    <property type="interactions" value="224"/>
</dbReference>
<dbReference type="BioGRID" id="851179">
    <property type="interactions" value="7"/>
</dbReference>
<dbReference type="ComplexPortal" id="CPX-4403">
    <property type="entry name" value="Ferric-citrate ABC transporter complex"/>
</dbReference>
<dbReference type="DIP" id="DIP-9584N"/>
<dbReference type="FunCoup" id="P15028">
    <property type="interactions" value="384"/>
</dbReference>
<dbReference type="IntAct" id="P15028">
    <property type="interactions" value="10"/>
</dbReference>
<dbReference type="STRING" id="511145.b4290"/>
<dbReference type="TCDB" id="3.A.1.14.1">
    <property type="family name" value="the atp-binding cassette (abc) superfamily"/>
</dbReference>
<dbReference type="jPOST" id="P15028"/>
<dbReference type="PaxDb" id="511145-b4290"/>
<dbReference type="EnsemblBacteria" id="AAC77246">
    <property type="protein sequence ID" value="AAC77246"/>
    <property type="gene ID" value="b4290"/>
</dbReference>
<dbReference type="GeneID" id="946838"/>
<dbReference type="KEGG" id="ecj:JW4250"/>
<dbReference type="KEGG" id="eco:b4290"/>
<dbReference type="KEGG" id="ecoc:C3026_23135"/>
<dbReference type="PATRIC" id="fig|1411691.4.peg.2409"/>
<dbReference type="EchoBASE" id="EB0283"/>
<dbReference type="eggNOG" id="COG4594">
    <property type="taxonomic scope" value="Bacteria"/>
</dbReference>
<dbReference type="HOGENOM" id="CLU_038034_0_0_6"/>
<dbReference type="InParanoid" id="P15028"/>
<dbReference type="OMA" id="DETWYLG"/>
<dbReference type="OrthoDB" id="9793175at2"/>
<dbReference type="PhylomeDB" id="P15028"/>
<dbReference type="BioCyc" id="EcoCyc:FECB-MONOMER"/>
<dbReference type="BioCyc" id="MetaCyc:FECB-MONOMER"/>
<dbReference type="PHI-base" id="PHI:11751"/>
<dbReference type="PHI-base" id="PHI:8007"/>
<dbReference type="PRO" id="PR:P15028"/>
<dbReference type="Proteomes" id="UP000000625">
    <property type="component" value="Chromosome"/>
</dbReference>
<dbReference type="GO" id="GO:0055052">
    <property type="term" value="C:ATP-binding cassette (ABC) transporter complex, substrate-binding subunit-containing"/>
    <property type="evidence" value="ECO:0000303"/>
    <property type="project" value="ComplexPortal"/>
</dbReference>
<dbReference type="GO" id="GO:0016020">
    <property type="term" value="C:membrane"/>
    <property type="evidence" value="ECO:0000303"/>
    <property type="project" value="ComplexPortal"/>
</dbReference>
<dbReference type="GO" id="GO:0030288">
    <property type="term" value="C:outer membrane-bounded periplasmic space"/>
    <property type="evidence" value="ECO:0000255"/>
    <property type="project" value="EcoCyc"/>
</dbReference>
<dbReference type="GO" id="GO:0006879">
    <property type="term" value="P:intracellular iron ion homeostasis"/>
    <property type="evidence" value="ECO:0000303"/>
    <property type="project" value="ComplexPortal"/>
</dbReference>
<dbReference type="GO" id="GO:0033212">
    <property type="term" value="P:iron import into cell"/>
    <property type="evidence" value="ECO:0000303"/>
    <property type="project" value="ComplexPortal"/>
</dbReference>
<dbReference type="GO" id="GO:0010039">
    <property type="term" value="P:response to iron ion"/>
    <property type="evidence" value="ECO:0000270"/>
    <property type="project" value="EcoCyc"/>
</dbReference>
<dbReference type="GO" id="GO:0033214">
    <property type="term" value="P:siderophore-dependent iron import into cell"/>
    <property type="evidence" value="ECO:0000315"/>
    <property type="project" value="EcoCyc"/>
</dbReference>
<dbReference type="CDD" id="cd01146">
    <property type="entry name" value="FhuD"/>
    <property type="match status" value="1"/>
</dbReference>
<dbReference type="FunFam" id="3.40.50.1980:FF:000003">
    <property type="entry name" value="Iron ABC transporter substrate-binding protein"/>
    <property type="match status" value="1"/>
</dbReference>
<dbReference type="Gene3D" id="3.40.50.1980">
    <property type="entry name" value="Nitrogenase molybdenum iron protein domain"/>
    <property type="match status" value="2"/>
</dbReference>
<dbReference type="InterPro" id="IPR002491">
    <property type="entry name" value="ABC_transptr_periplasmic_BD"/>
</dbReference>
<dbReference type="InterPro" id="IPR051313">
    <property type="entry name" value="Bact_iron-sidero_bind"/>
</dbReference>
<dbReference type="NCBIfam" id="NF008501">
    <property type="entry name" value="PRK11411.1"/>
    <property type="match status" value="1"/>
</dbReference>
<dbReference type="PANTHER" id="PTHR30532:SF29">
    <property type="entry name" value="FE(3+) DICITRATE-BINDING PERIPLASMIC PROTEIN"/>
    <property type="match status" value="1"/>
</dbReference>
<dbReference type="PANTHER" id="PTHR30532">
    <property type="entry name" value="IRON III DICITRATE-BINDING PERIPLASMIC PROTEIN"/>
    <property type="match status" value="1"/>
</dbReference>
<dbReference type="Pfam" id="PF01497">
    <property type="entry name" value="Peripla_BP_2"/>
    <property type="match status" value="1"/>
</dbReference>
<dbReference type="SUPFAM" id="SSF53807">
    <property type="entry name" value="Helical backbone' metal receptor"/>
    <property type="match status" value="1"/>
</dbReference>
<dbReference type="PROSITE" id="PS50983">
    <property type="entry name" value="FE_B12_PBP"/>
    <property type="match status" value="1"/>
</dbReference>
<proteinExistence type="evidence at protein level"/>
<reference key="1">
    <citation type="journal article" date="1989" name="J. Bacteriol.">
        <title>Nucleotide sequences of the fecBCDE genes and locations of the proteins suggest a periplasmic-binding-protein-dependent transport mechanism for iron(III) dicitrate in Escherichia coli.</title>
        <authorList>
            <person name="Staudenmaier H."/>
            <person name="van Hove B."/>
            <person name="Yaraghi Z."/>
            <person name="Braun V."/>
        </authorList>
    </citation>
    <scope>NUCLEOTIDE SEQUENCE [GENOMIC DNA]</scope>
    <scope>FUNCTION</scope>
    <scope>SUBUNIT</scope>
    <scope>SUBCELLULAR LOCATION</scope>
    <source>
        <strain>K12</strain>
    </source>
</reference>
<reference key="2">
    <citation type="journal article" date="1995" name="Nucleic Acids Res.">
        <title>Analysis of the Escherichia coli genome VI: DNA sequence of the region from 92.8 through 100 minutes.</title>
        <authorList>
            <person name="Burland V.D."/>
            <person name="Plunkett G. III"/>
            <person name="Sofia H.J."/>
            <person name="Daniels D.L."/>
            <person name="Blattner F.R."/>
        </authorList>
    </citation>
    <scope>NUCLEOTIDE SEQUENCE [LARGE SCALE GENOMIC DNA]</scope>
    <source>
        <strain>K12 / MG1655 / ATCC 47076</strain>
    </source>
</reference>
<reference key="3">
    <citation type="journal article" date="1997" name="Science">
        <title>The complete genome sequence of Escherichia coli K-12.</title>
        <authorList>
            <person name="Blattner F.R."/>
            <person name="Plunkett G. III"/>
            <person name="Bloch C.A."/>
            <person name="Perna N.T."/>
            <person name="Burland V."/>
            <person name="Riley M."/>
            <person name="Collado-Vides J."/>
            <person name="Glasner J.D."/>
            <person name="Rode C.K."/>
            <person name="Mayhew G.F."/>
            <person name="Gregor J."/>
            <person name="Davis N.W."/>
            <person name="Kirkpatrick H.A."/>
            <person name="Goeden M.A."/>
            <person name="Rose D.J."/>
            <person name="Mau B."/>
            <person name="Shao Y."/>
        </authorList>
    </citation>
    <scope>NUCLEOTIDE SEQUENCE [LARGE SCALE GENOMIC DNA]</scope>
    <source>
        <strain>K12 / MG1655 / ATCC 47076</strain>
    </source>
</reference>
<reference key="4">
    <citation type="journal article" date="2006" name="Mol. Syst. Biol.">
        <title>Highly accurate genome sequences of Escherichia coli K-12 strains MG1655 and W3110.</title>
        <authorList>
            <person name="Hayashi K."/>
            <person name="Morooka N."/>
            <person name="Yamamoto Y."/>
            <person name="Fujita K."/>
            <person name="Isono K."/>
            <person name="Choi S."/>
            <person name="Ohtsubo E."/>
            <person name="Baba T."/>
            <person name="Wanner B.L."/>
            <person name="Mori H."/>
            <person name="Horiuchi T."/>
        </authorList>
    </citation>
    <scope>NUCLEOTIDE SEQUENCE [LARGE SCALE GENOMIC DNA]</scope>
    <source>
        <strain>K12 / W3110 / ATCC 27325 / DSM 5911</strain>
    </source>
</reference>
<reference key="5">
    <citation type="journal article" date="1988" name="J. Bacteriol.">
        <title>Genetics of the iron dicitrate transport system of Escherichia coli.</title>
        <authorList>
            <person name="Pressler U."/>
            <person name="Staudenmaier H."/>
            <person name="Zimmermann L."/>
            <person name="Braun V."/>
        </authorList>
    </citation>
    <scope>SUBCELLULAR LOCATION</scope>
</reference>
<reference key="6">
    <citation type="journal article" date="2007" name="J. Bacteriol.">
        <title>Docking of the periplasmic FecB binding protein to the FecCD transmembrane proteins in the ferric citrate transport system of Escherichia coli.</title>
        <authorList>
            <person name="Braun V."/>
            <person name="Herrmann C."/>
        </authorList>
    </citation>
    <scope>FUNCTION</scope>
    <scope>INTERACTION WITH FECC AND FECD</scope>
    <scope>MUTAGENESIS OF LYS-68; ARG-69; GLU-93; ARG-183; GLU-222; ARG-245; TRP-246 AND GLN-248</scope>
    <source>
        <strain>K12</strain>
    </source>
</reference>
<reference key="7">
    <citation type="journal article" date="2009" name="Mol. Cell">
        <title>Hydroxyurea induces hydroxyl radical-mediated cell death in Escherichia coli.</title>
        <authorList>
            <person name="Davies B.W."/>
            <person name="Kohanski M.A."/>
            <person name="Simmons L.A."/>
            <person name="Winkler J.A."/>
            <person name="Collins J.J."/>
            <person name="Walker G.C."/>
        </authorList>
    </citation>
    <scope>INDUCTION BY HYDROXYUREA</scope>
    <source>
        <strain>K12 / MC4100 / ATCC 35695 / DSM 6574</strain>
    </source>
</reference>
<reference key="8">
    <citation type="journal article" date="2016" name="Metallomics">
        <title>FecB, a periplasmic ferric-citrate transporter from E. coli, can bind different forms of ferric-citrate as well as a wide variety of metal-free and metal-loaded tricarboxylic acids.</title>
        <authorList>
            <person name="Banerjee S."/>
            <person name="Paul S."/>
            <person name="Nguyen L.T."/>
            <person name="Chu B.C."/>
            <person name="Vogel H.J."/>
        </authorList>
    </citation>
    <scope>FUNCTION</scope>
    <scope>SUBSTRATE-BINDING</scope>
</reference>
<accession>P15028</accession>
<accession>P76816</accession>
<accession>Q2M625</accession>
<evidence type="ECO:0000255" key="1"/>
<evidence type="ECO:0000255" key="2">
    <source>
        <dbReference type="PROSITE-ProRule" id="PRU00344"/>
    </source>
</evidence>
<evidence type="ECO:0000269" key="3">
    <source>
    </source>
</evidence>
<evidence type="ECO:0000269" key="4">
    <source>
    </source>
</evidence>
<evidence type="ECO:0000269" key="5">
    <source>
    </source>
</evidence>
<evidence type="ECO:0000269" key="6">
    <source>
    </source>
</evidence>
<evidence type="ECO:0000269" key="7">
    <source>
    </source>
</evidence>
<evidence type="ECO:0000303" key="8">
    <source>
    </source>
</evidence>
<evidence type="ECO:0000305" key="9"/>
<gene>
    <name evidence="8" type="primary">fecB</name>
    <name type="ordered locus">b4290</name>
    <name type="ordered locus">JW4250</name>
</gene>
<organism>
    <name type="scientific">Escherichia coli (strain K12)</name>
    <dbReference type="NCBI Taxonomy" id="83333"/>
    <lineage>
        <taxon>Bacteria</taxon>
        <taxon>Pseudomonadati</taxon>
        <taxon>Pseudomonadota</taxon>
        <taxon>Gammaproteobacteria</taxon>
        <taxon>Enterobacterales</taxon>
        <taxon>Enterobacteriaceae</taxon>
        <taxon>Escherichia</taxon>
    </lineage>
</organism>
<feature type="signal peptide" evidence="1">
    <location>
        <begin position="1"/>
        <end position="21"/>
    </location>
</feature>
<feature type="chain" id="PRO_0000031820" description="Fe(3+) dicitrate-binding periplasmic protein FecB">
    <location>
        <begin position="22"/>
        <end position="300"/>
    </location>
</feature>
<feature type="domain" description="Fe/B12 periplasmic-binding" evidence="2">
    <location>
        <begin position="39"/>
        <end position="295"/>
    </location>
</feature>
<feature type="sequence variant" description="In strain: B.">
    <original>L</original>
    <variation>V</variation>
    <location>
        <position position="8"/>
    </location>
</feature>
<feature type="mutagenesis site" description="No change in citrate-mediated Fe(3+) transport." evidence="3">
    <original>K</original>
    <variation>C</variation>
    <location>
        <position position="68"/>
    </location>
</feature>
<feature type="mutagenesis site" description="NO change in citrate-mediated Fe(3+) transport." evidence="3">
    <original>R</original>
    <variation>C</variation>
    <location>
        <position position="69"/>
    </location>
</feature>
<feature type="mutagenesis site" description="Retains 10% of wild-type citrate-mediated Fe(3+) transport." evidence="3">
    <original>E</original>
    <variation>A</variation>
    <location>
        <position position="93"/>
    </location>
</feature>
<feature type="mutagenesis site" description="Retains 17% of wild-type citrate-mediated Fe(3+) transport." evidence="3">
    <original>E</original>
    <variation>C</variation>
    <location>
        <position position="93"/>
    </location>
</feature>
<feature type="mutagenesis site" description="Retains 13% of wild-type citrate-mediated Fe(3+) transport." evidence="3">
    <original>E</original>
    <variation>R</variation>
    <location>
        <position position="93"/>
    </location>
</feature>
<feature type="mutagenesis site" description="Retains 13% of wild-type citrate-mediated Fe(3+) transport." evidence="3">
    <original>R</original>
    <variation>C</variation>
    <location>
        <position position="183"/>
    </location>
</feature>
<feature type="mutagenesis site" description="Retains 26% of wild-type citrate-mediated Fe(3+) transport." evidence="3">
    <original>E</original>
    <variation>A</variation>
    <location>
        <position position="222"/>
    </location>
</feature>
<feature type="mutagenesis site" description="Retains 32% of wild-type citrate-mediated Fe(3+) transport." evidence="3">
    <original>E</original>
    <variation>C</variation>
    <location>
        <position position="222"/>
    </location>
</feature>
<feature type="mutagenesis site" description="Retains 16% of wild-type citrate-mediated Fe(3+) transport." evidence="3">
    <original>E</original>
    <variation>R</variation>
    <location>
        <position position="222"/>
    </location>
</feature>
<feature type="mutagenesis site" description="Retains 95% of wild-type citrate-mediated Fe(3+) transport." evidence="3">
    <original>R</original>
    <variation>C</variation>
    <location>
        <position position="245"/>
    </location>
</feature>
<feature type="mutagenesis site" description="Retains 8% of wild-type citrate-mediated Fe(3+) transport." evidence="3">
    <original>W</original>
    <variation>C</variation>
    <location>
        <position position="246"/>
    </location>
</feature>
<feature type="mutagenesis site" description="Retains 92% of wild-type citrate-mediated Fe(3+) transport." evidence="3">
    <original>Q</original>
    <variation>C</variation>
    <location>
        <position position="248"/>
    </location>
</feature>
<feature type="sequence conflict" description="In Ref. 1; AAA23762." evidence="9" ref="1">
    <original>T</original>
    <variation>M</variation>
    <location>
        <position position="23"/>
    </location>
</feature>
<feature type="sequence conflict" description="In Ref. 1; AAA23762." evidence="9" ref="1">
    <original>I</original>
    <variation>S</variation>
    <location>
        <position position="57"/>
    </location>
</feature>
<comment type="function">
    <text evidence="3 5 6">Part of the ABC transporter complex FecBCDE involved in citrate-dependent Fe(3+) uptake (PubMed:17660286, PubMed:2651410). Binds both iron-free and iron-loaded citrate although it binds iron-loaded citrate with a higher affinity (PubMed:26600288). Binds different forms of Fe(3+)-citrate as well as citrate complexed with various representative Fe(3+)-mimics (Ga(3+), Al(3+), Sc(3+) and In(3+)) and a representative divalent metal ion (Mg(2+)) (PubMed:26600288). Can also bind various tricarboxylates in iron-free and iron-loaded form (PubMed:26600288).</text>
</comment>
<comment type="subunit">
    <text evidence="3 5">The complex is composed of two ATP-binding proteins (FecE), two transmembrane proteins (FecC and FecD) and a solute-binding protein (FecB) (PubMed:2651410). Interacts with FecC and FecD (PubMed:17660286).</text>
</comment>
<comment type="subcellular location">
    <subcellularLocation>
        <location evidence="5 7">Periplasm</location>
    </subcellularLocation>
</comment>
<comment type="induction">
    <text evidence="4">Induced 1.8-fold by hydroxyurea.</text>
</comment>
<comment type="similarity">
    <text evidence="9">Belongs to the bacterial solute-binding protein 8 family.</text>
</comment>
<comment type="sequence caution" evidence="9">
    <conflict type="erroneous initiation">
        <sequence resource="EMBL-CDS" id="AAA97186"/>
    </conflict>
    <text>Extended N-terminus.</text>
</comment>